<comment type="function">
    <text evidence="1">Catalyzes the radical-mediated synthesis of 5-amino-5-(4-hydroxybenzyl)-6-(D-ribitylimino)-5,6-dihydrouracil from 5-amino-6-(D-ribitylamino)uracil and L-tyrosine.</text>
</comment>
<comment type="catalytic activity">
    <reaction evidence="1">
        <text>5-amino-6-(D-ribitylamino)uracil + L-tyrosine + S-adenosyl-L-methionine = 5-amino-5-(4-hydroxybenzyl)-6-(D-ribitylimino)-5,6-dihydrouracil + 2-iminoacetate + 5'-deoxyadenosine + L-methionine + H(+)</text>
        <dbReference type="Rhea" id="RHEA:55200"/>
        <dbReference type="ChEBI" id="CHEBI:15378"/>
        <dbReference type="ChEBI" id="CHEBI:15934"/>
        <dbReference type="ChEBI" id="CHEBI:17319"/>
        <dbReference type="ChEBI" id="CHEBI:57844"/>
        <dbReference type="ChEBI" id="CHEBI:58315"/>
        <dbReference type="ChEBI" id="CHEBI:59789"/>
        <dbReference type="ChEBI" id="CHEBI:77846"/>
        <dbReference type="ChEBI" id="CHEBI:85936"/>
        <dbReference type="EC" id="2.5.1.147"/>
    </reaction>
</comment>
<comment type="cofactor">
    <cofactor evidence="1">
        <name>[4Fe-4S] cluster</name>
        <dbReference type="ChEBI" id="CHEBI:49883"/>
    </cofactor>
    <text evidence="1">Binds 1 [4Fe-4S] cluster. The cluster is coordinated with 3 cysteines and an exchangeable S-adenosyl-L-methionine.</text>
</comment>
<comment type="pathway">
    <text evidence="1">Cofactor biosynthesis; coenzyme F0 biosynthesis.</text>
</comment>
<comment type="subunit">
    <text evidence="1">Consists of two subunits, CofG and CofH.</text>
</comment>
<comment type="similarity">
    <text evidence="1">Belongs to the radical SAM superfamily. CofH family.</text>
</comment>
<dbReference type="EC" id="2.5.1.147" evidence="1"/>
<dbReference type="EMBL" id="CP000300">
    <property type="protein sequence ID" value="ABE52221.1"/>
    <property type="molecule type" value="Genomic_DNA"/>
</dbReference>
<dbReference type="RefSeq" id="WP_011499366.1">
    <property type="nucleotide sequence ID" value="NC_007955.1"/>
</dbReference>
<dbReference type="SMR" id="Q12WF5"/>
<dbReference type="STRING" id="259564.Mbur_1303"/>
<dbReference type="GeneID" id="3998591"/>
<dbReference type="KEGG" id="mbu:Mbur_1303"/>
<dbReference type="HOGENOM" id="CLU_040406_1_0_2"/>
<dbReference type="OrthoDB" id="8186at2157"/>
<dbReference type="UniPathway" id="UPA00072"/>
<dbReference type="Proteomes" id="UP000001979">
    <property type="component" value="Chromosome"/>
</dbReference>
<dbReference type="GO" id="GO:0051539">
    <property type="term" value="F:4 iron, 4 sulfur cluster binding"/>
    <property type="evidence" value="ECO:0007669"/>
    <property type="project" value="UniProtKB-KW"/>
</dbReference>
<dbReference type="GO" id="GO:0141093">
    <property type="term" value="F:5-amino-6-(D-ribitylamino)uracil--L-tyrosine 4-hydroxyphenyl transferase activity"/>
    <property type="evidence" value="ECO:0007669"/>
    <property type="project" value="UniProtKB-EC"/>
</dbReference>
<dbReference type="GO" id="GO:0044689">
    <property type="term" value="F:7,8-didemethyl-8-hydroxy-5-deazariboflavin synthase activity"/>
    <property type="evidence" value="ECO:0007669"/>
    <property type="project" value="TreeGrafter"/>
</dbReference>
<dbReference type="GO" id="GO:0005506">
    <property type="term" value="F:iron ion binding"/>
    <property type="evidence" value="ECO:0007669"/>
    <property type="project" value="UniProtKB-UniRule"/>
</dbReference>
<dbReference type="CDD" id="cd01335">
    <property type="entry name" value="Radical_SAM"/>
    <property type="match status" value="1"/>
</dbReference>
<dbReference type="Gene3D" id="3.20.20.70">
    <property type="entry name" value="Aldolase class I"/>
    <property type="match status" value="1"/>
</dbReference>
<dbReference type="HAMAP" id="MF_01612">
    <property type="entry name" value="FO_synth_sub2"/>
    <property type="match status" value="1"/>
</dbReference>
<dbReference type="InterPro" id="IPR013785">
    <property type="entry name" value="Aldolase_TIM"/>
</dbReference>
<dbReference type="InterPro" id="IPR045567">
    <property type="entry name" value="CofH/MnqC-like_C"/>
</dbReference>
<dbReference type="InterPro" id="IPR019940">
    <property type="entry name" value="CofH_family"/>
</dbReference>
<dbReference type="InterPro" id="IPR006638">
    <property type="entry name" value="Elp3/MiaA/NifB-like_rSAM"/>
</dbReference>
<dbReference type="InterPro" id="IPR034405">
    <property type="entry name" value="F420"/>
</dbReference>
<dbReference type="InterPro" id="IPR020050">
    <property type="entry name" value="FO_synthase_su2"/>
</dbReference>
<dbReference type="InterPro" id="IPR007197">
    <property type="entry name" value="rSAM"/>
</dbReference>
<dbReference type="NCBIfam" id="TIGR00423">
    <property type="entry name" value="CofH family radical SAM protein"/>
    <property type="match status" value="1"/>
</dbReference>
<dbReference type="NCBIfam" id="TIGR03551">
    <property type="entry name" value="F420_cofH"/>
    <property type="match status" value="1"/>
</dbReference>
<dbReference type="NCBIfam" id="NF005609">
    <property type="entry name" value="PRK07360.1"/>
    <property type="match status" value="1"/>
</dbReference>
<dbReference type="PANTHER" id="PTHR43076">
    <property type="entry name" value="FO SYNTHASE (COFH)"/>
    <property type="match status" value="1"/>
</dbReference>
<dbReference type="PANTHER" id="PTHR43076:SF1">
    <property type="entry name" value="LIPOYL SYNTHASE 2"/>
    <property type="match status" value="1"/>
</dbReference>
<dbReference type="Pfam" id="PF19288">
    <property type="entry name" value="CofH_C"/>
    <property type="match status" value="1"/>
</dbReference>
<dbReference type="Pfam" id="PF04055">
    <property type="entry name" value="Radical_SAM"/>
    <property type="match status" value="1"/>
</dbReference>
<dbReference type="PIRSF" id="PIRSF004762">
    <property type="entry name" value="CHP00423"/>
    <property type="match status" value="1"/>
</dbReference>
<dbReference type="SFLD" id="SFLDF00293">
    <property type="entry name" value="((2_3_4_5-tetrahydroxypentyl)a"/>
    <property type="match status" value="1"/>
</dbReference>
<dbReference type="SFLD" id="SFLDF00343">
    <property type="entry name" value="aminofutalosine_synthase_(mqnE"/>
    <property type="match status" value="1"/>
</dbReference>
<dbReference type="SFLD" id="SFLDF00342">
    <property type="entry name" value="cyclic_dehypoxanthine_futalosi"/>
    <property type="match status" value="1"/>
</dbReference>
<dbReference type="SFLD" id="SFLDG01389">
    <property type="entry name" value="menaquinone_synthsis_involved"/>
    <property type="match status" value="1"/>
</dbReference>
<dbReference type="SFLD" id="SFLDS00029">
    <property type="entry name" value="Radical_SAM"/>
    <property type="match status" value="1"/>
</dbReference>
<dbReference type="SMART" id="SM00729">
    <property type="entry name" value="Elp3"/>
    <property type="match status" value="1"/>
</dbReference>
<dbReference type="SUPFAM" id="SSF102114">
    <property type="entry name" value="Radical SAM enzymes"/>
    <property type="match status" value="1"/>
</dbReference>
<dbReference type="PROSITE" id="PS51918">
    <property type="entry name" value="RADICAL_SAM"/>
    <property type="match status" value="1"/>
</dbReference>
<proteinExistence type="inferred from homology"/>
<name>COFH_METBU</name>
<evidence type="ECO:0000255" key="1">
    <source>
        <dbReference type="HAMAP-Rule" id="MF_01612"/>
    </source>
</evidence>
<evidence type="ECO:0000255" key="2">
    <source>
        <dbReference type="PROSITE-ProRule" id="PRU01266"/>
    </source>
</evidence>
<gene>
    <name evidence="1" type="primary">cofH</name>
    <name type="ordered locus">Mbur_1303</name>
</gene>
<protein>
    <recommendedName>
        <fullName evidence="1">5-amino-6-(D-ribitylamino)uracil--L-tyrosine 4-hydroxyphenyl transferase</fullName>
        <ecNumber evidence="1">2.5.1.147</ecNumber>
    </recommendedName>
    <alternativeName>
        <fullName evidence="1">FO synthase subunit 2</fullName>
    </alternativeName>
</protein>
<sequence length="356" mass="39776">MIPDEIKERAYQGTTTKEDALTLLEIEPFELFELADQIRAKAVGDNVTYIVNRNINFTDICIGTCGFCAFKDKKGYLLSIDQIKDKIKEAHVSGATEVCIQGGLLPNVKIDLYIDILKAVKSDYPHIHTHCFSPMEVNHAAKASGLSVEETLKTLKANGLNTMPGTAAEILVDKVRNIICPDKLTRQEWIDTVTLAHKLGIQTTATMMYGHVDTWEDRIEHILTIRRIQKDTGGFSEFVPLSFMPYNNPIGEKMMEEGRFMNTGIDDLKIYAIARILLNTHINNIQTSWVKLGKKLAQMALYCGANDMGGTLMEESISSSAGASSGEAISAEELEWIIRATDRKPVQRDTLYRSIR</sequence>
<reference key="1">
    <citation type="journal article" date="2009" name="ISME J.">
        <title>The genome sequence of the psychrophilic archaeon, Methanococcoides burtonii: the role of genome evolution in cold adaptation.</title>
        <authorList>
            <person name="Allen M.A."/>
            <person name="Lauro F.M."/>
            <person name="Williams T.J."/>
            <person name="Burg D."/>
            <person name="Siddiqui K.S."/>
            <person name="De Francisci D."/>
            <person name="Chong K.W."/>
            <person name="Pilak O."/>
            <person name="Chew H.H."/>
            <person name="De Maere M.Z."/>
            <person name="Ting L."/>
            <person name="Katrib M."/>
            <person name="Ng C."/>
            <person name="Sowers K.R."/>
            <person name="Galperin M.Y."/>
            <person name="Anderson I.J."/>
            <person name="Ivanova N."/>
            <person name="Dalin E."/>
            <person name="Martinez M."/>
            <person name="Lapidus A."/>
            <person name="Hauser L."/>
            <person name="Land M."/>
            <person name="Thomas T."/>
            <person name="Cavicchioli R."/>
        </authorList>
    </citation>
    <scope>NUCLEOTIDE SEQUENCE [LARGE SCALE GENOMIC DNA]</scope>
    <source>
        <strain>DSM 6242 / NBRC 107633 / OCM 468 / ACE-M</strain>
    </source>
</reference>
<keyword id="KW-0004">4Fe-4S</keyword>
<keyword id="KW-0408">Iron</keyword>
<keyword id="KW-0411">Iron-sulfur</keyword>
<keyword id="KW-0479">Metal-binding</keyword>
<keyword id="KW-0949">S-adenosyl-L-methionine</keyword>
<keyword id="KW-0808">Transferase</keyword>
<feature type="chain" id="PRO_0000335564" description="5-amino-6-(D-ribitylamino)uracil--L-tyrosine 4-hydroxyphenyl transferase">
    <location>
        <begin position="1"/>
        <end position="356"/>
    </location>
</feature>
<feature type="domain" description="Radical SAM core" evidence="2">
    <location>
        <begin position="47"/>
        <end position="281"/>
    </location>
</feature>
<feature type="binding site" evidence="1">
    <location>
        <position position="61"/>
    </location>
    <ligand>
        <name>[4Fe-4S] cluster</name>
        <dbReference type="ChEBI" id="CHEBI:49883"/>
        <note>4Fe-4S-S-AdoMet</note>
    </ligand>
</feature>
<feature type="binding site" evidence="1">
    <location>
        <position position="65"/>
    </location>
    <ligand>
        <name>[4Fe-4S] cluster</name>
        <dbReference type="ChEBI" id="CHEBI:49883"/>
        <note>4Fe-4S-S-AdoMet</note>
    </ligand>
</feature>
<feature type="binding site" evidence="1">
    <location>
        <position position="68"/>
    </location>
    <ligand>
        <name>[4Fe-4S] cluster</name>
        <dbReference type="ChEBI" id="CHEBI:49883"/>
        <note>4Fe-4S-S-AdoMet</note>
    </ligand>
</feature>
<organism>
    <name type="scientific">Methanococcoides burtonii (strain DSM 6242 / NBRC 107633 / OCM 468 / ACE-M)</name>
    <dbReference type="NCBI Taxonomy" id="259564"/>
    <lineage>
        <taxon>Archaea</taxon>
        <taxon>Methanobacteriati</taxon>
        <taxon>Methanobacteriota</taxon>
        <taxon>Stenosarchaea group</taxon>
        <taxon>Methanomicrobia</taxon>
        <taxon>Methanosarcinales</taxon>
        <taxon>Methanosarcinaceae</taxon>
        <taxon>Methanococcoides</taxon>
    </lineage>
</organism>
<accession>Q12WF5</accession>